<name>ZAPD_YERE8</name>
<proteinExistence type="inferred from homology"/>
<sequence length="250" mass="28544">MSDLTSTILFEHPLNEKMRTWLRMEFLLQQLESQRTLDNIASALTFFRTASDLIDVLERGEVRTDLLKELERQQQKLQLWADMPGVDMSLVDSLRSQLKSRASVLMSAPRIGQSLKEDRLISVVRQRLSIPGGCCSFDLPTLHTWLHQPQEQRNQHIDKLLTSLTPLNQSLTIILNLIRQSGPLRAQISLNGFFQDNAEGADLLRLRLPLDPQLYPQISGHKTRYAIRFLPLDSENGTVPARLSFELACC</sequence>
<reference key="1">
    <citation type="journal article" date="2006" name="PLoS Genet.">
        <title>The complete genome sequence and comparative genome analysis of the high pathogenicity Yersinia enterocolitica strain 8081.</title>
        <authorList>
            <person name="Thomson N.R."/>
            <person name="Howard S."/>
            <person name="Wren B.W."/>
            <person name="Holden M.T.G."/>
            <person name="Crossman L."/>
            <person name="Challis G.L."/>
            <person name="Churcher C."/>
            <person name="Mungall K."/>
            <person name="Brooks K."/>
            <person name="Chillingworth T."/>
            <person name="Feltwell T."/>
            <person name="Abdellah Z."/>
            <person name="Hauser H."/>
            <person name="Jagels K."/>
            <person name="Maddison M."/>
            <person name="Moule S."/>
            <person name="Sanders M."/>
            <person name="Whitehead S."/>
            <person name="Quail M.A."/>
            <person name="Dougan G."/>
            <person name="Parkhill J."/>
            <person name="Prentice M.B."/>
        </authorList>
    </citation>
    <scope>NUCLEOTIDE SEQUENCE [LARGE SCALE GENOMIC DNA]</scope>
    <source>
        <strain>NCTC 13174 / 8081</strain>
    </source>
</reference>
<organism>
    <name type="scientific">Yersinia enterocolitica serotype O:8 / biotype 1B (strain NCTC 13174 / 8081)</name>
    <dbReference type="NCBI Taxonomy" id="393305"/>
    <lineage>
        <taxon>Bacteria</taxon>
        <taxon>Pseudomonadati</taxon>
        <taxon>Pseudomonadota</taxon>
        <taxon>Gammaproteobacteria</taxon>
        <taxon>Enterobacterales</taxon>
        <taxon>Yersiniaceae</taxon>
        <taxon>Yersinia</taxon>
    </lineage>
</organism>
<protein>
    <recommendedName>
        <fullName evidence="1">Cell division protein ZapD</fullName>
    </recommendedName>
    <alternativeName>
        <fullName evidence="1">Z ring-associated protein D</fullName>
    </alternativeName>
</protein>
<evidence type="ECO:0000255" key="1">
    <source>
        <dbReference type="HAMAP-Rule" id="MF_01092"/>
    </source>
</evidence>
<accession>A1JJK6</accession>
<dbReference type="EMBL" id="AM286415">
    <property type="protein sequence ID" value="CAL10793.1"/>
    <property type="molecule type" value="Genomic_DNA"/>
</dbReference>
<dbReference type="RefSeq" id="WP_005167091.1">
    <property type="nucleotide sequence ID" value="NC_008800.1"/>
</dbReference>
<dbReference type="RefSeq" id="YP_001005033.1">
    <property type="nucleotide sequence ID" value="NC_008800.1"/>
</dbReference>
<dbReference type="SMR" id="A1JJK6"/>
<dbReference type="KEGG" id="yen:YE0684"/>
<dbReference type="PATRIC" id="fig|393305.7.peg.779"/>
<dbReference type="eggNOG" id="COG4582">
    <property type="taxonomic scope" value="Bacteria"/>
</dbReference>
<dbReference type="HOGENOM" id="CLU_076303_0_0_6"/>
<dbReference type="OrthoDB" id="5294622at2"/>
<dbReference type="Proteomes" id="UP000000642">
    <property type="component" value="Chromosome"/>
</dbReference>
<dbReference type="GO" id="GO:0032153">
    <property type="term" value="C:cell division site"/>
    <property type="evidence" value="ECO:0007669"/>
    <property type="project" value="TreeGrafter"/>
</dbReference>
<dbReference type="GO" id="GO:0005737">
    <property type="term" value="C:cytoplasm"/>
    <property type="evidence" value="ECO:0007669"/>
    <property type="project" value="UniProtKB-SubCell"/>
</dbReference>
<dbReference type="GO" id="GO:0000917">
    <property type="term" value="P:division septum assembly"/>
    <property type="evidence" value="ECO:0007669"/>
    <property type="project" value="UniProtKB-KW"/>
</dbReference>
<dbReference type="GO" id="GO:0043093">
    <property type="term" value="P:FtsZ-dependent cytokinesis"/>
    <property type="evidence" value="ECO:0007669"/>
    <property type="project" value="UniProtKB-UniRule"/>
</dbReference>
<dbReference type="FunFam" id="1.10.3900.10:FF:000001">
    <property type="entry name" value="Cell division protein ZapD"/>
    <property type="match status" value="1"/>
</dbReference>
<dbReference type="FunFam" id="2.60.440.10:FF:000001">
    <property type="entry name" value="Cell division protein ZapD"/>
    <property type="match status" value="1"/>
</dbReference>
<dbReference type="Gene3D" id="1.10.3900.10">
    <property type="entry name" value="YacF-like"/>
    <property type="match status" value="1"/>
</dbReference>
<dbReference type="Gene3D" id="2.60.440.10">
    <property type="entry name" value="YacF-like domains"/>
    <property type="match status" value="1"/>
</dbReference>
<dbReference type="HAMAP" id="MF_01092">
    <property type="entry name" value="ZapD"/>
    <property type="match status" value="1"/>
</dbReference>
<dbReference type="InterPro" id="IPR009777">
    <property type="entry name" value="ZapD"/>
</dbReference>
<dbReference type="InterPro" id="IPR027462">
    <property type="entry name" value="ZapD_C"/>
</dbReference>
<dbReference type="InterPro" id="IPR036268">
    <property type="entry name" value="ZapD_sf"/>
</dbReference>
<dbReference type="NCBIfam" id="NF003653">
    <property type="entry name" value="PRK05287.1-1"/>
    <property type="match status" value="1"/>
</dbReference>
<dbReference type="NCBIfam" id="NF003655">
    <property type="entry name" value="PRK05287.1-3"/>
    <property type="match status" value="1"/>
</dbReference>
<dbReference type="PANTHER" id="PTHR39455">
    <property type="entry name" value="CELL DIVISION PROTEIN ZAPD"/>
    <property type="match status" value="1"/>
</dbReference>
<dbReference type="PANTHER" id="PTHR39455:SF1">
    <property type="entry name" value="CELL DIVISION PROTEIN ZAPD"/>
    <property type="match status" value="1"/>
</dbReference>
<dbReference type="Pfam" id="PF07072">
    <property type="entry name" value="ZapD"/>
    <property type="match status" value="1"/>
</dbReference>
<dbReference type="SUPFAM" id="SSF160950">
    <property type="entry name" value="YacF-like"/>
    <property type="match status" value="1"/>
</dbReference>
<feature type="chain" id="PRO_1000064929" description="Cell division protein ZapD">
    <location>
        <begin position="1"/>
        <end position="250"/>
    </location>
</feature>
<keyword id="KW-0131">Cell cycle</keyword>
<keyword id="KW-0132">Cell division</keyword>
<keyword id="KW-0963">Cytoplasm</keyword>
<keyword id="KW-0717">Septation</keyword>
<comment type="function">
    <text evidence="1">Cell division factor that enhances FtsZ-ring assembly. Directly interacts with FtsZ and promotes bundling of FtsZ protofilaments, with a reduction in FtsZ GTPase activity.</text>
</comment>
<comment type="subunit">
    <text evidence="1">Interacts with FtsZ.</text>
</comment>
<comment type="subcellular location">
    <subcellularLocation>
        <location evidence="1">Cytoplasm</location>
    </subcellularLocation>
    <text evidence="1">Localizes to mid-cell in an FtsZ-dependent manner.</text>
</comment>
<comment type="similarity">
    <text evidence="1">Belongs to the ZapD family.</text>
</comment>
<gene>
    <name evidence="1" type="primary">zapD</name>
    <name type="ordered locus">YE0684</name>
</gene>